<feature type="chain" id="PRO_0000349654" description="tRNA-specific 2-thiouridylase MnmA">
    <location>
        <begin position="1"/>
        <end position="385"/>
    </location>
</feature>
<feature type="region of interest" description="Interaction with target base in tRNA" evidence="1">
    <location>
        <begin position="118"/>
        <end position="120"/>
    </location>
</feature>
<feature type="region of interest" description="Interaction with tRNA" evidence="1">
    <location>
        <begin position="170"/>
        <end position="172"/>
    </location>
</feature>
<feature type="region of interest" description="Interaction with tRNA" evidence="1">
    <location>
        <begin position="332"/>
        <end position="333"/>
    </location>
</feature>
<feature type="active site" description="Nucleophile" evidence="1">
    <location>
        <position position="123"/>
    </location>
</feature>
<feature type="active site" description="Cysteine persulfide intermediate" evidence="1">
    <location>
        <position position="220"/>
    </location>
</feature>
<feature type="binding site" evidence="1">
    <location>
        <begin position="30"/>
        <end position="37"/>
    </location>
    <ligand>
        <name>ATP</name>
        <dbReference type="ChEBI" id="CHEBI:30616"/>
    </ligand>
</feature>
<feature type="binding site" evidence="1">
    <location>
        <position position="56"/>
    </location>
    <ligand>
        <name>ATP</name>
        <dbReference type="ChEBI" id="CHEBI:30616"/>
    </ligand>
</feature>
<feature type="binding site" evidence="1">
    <location>
        <position position="148"/>
    </location>
    <ligand>
        <name>ATP</name>
        <dbReference type="ChEBI" id="CHEBI:30616"/>
    </ligand>
</feature>
<feature type="site" description="Interaction with tRNA" evidence="1">
    <location>
        <position position="149"/>
    </location>
</feature>
<feature type="site" description="Interaction with tRNA" evidence="1">
    <location>
        <position position="365"/>
    </location>
</feature>
<feature type="disulfide bond" description="Alternate" evidence="1">
    <location>
        <begin position="123"/>
        <end position="220"/>
    </location>
</feature>
<reference key="1">
    <citation type="journal article" date="2007" name="Genome Biol.">
        <title>Characterization and modeling of the Haemophilus influenzae core and supragenomes based on the complete genomic sequences of Rd and 12 clinical nontypeable strains.</title>
        <authorList>
            <person name="Hogg J.S."/>
            <person name="Hu F.Z."/>
            <person name="Janto B."/>
            <person name="Boissy R."/>
            <person name="Hayes J."/>
            <person name="Keefe R."/>
            <person name="Post J.C."/>
            <person name="Ehrlich G.D."/>
        </authorList>
    </citation>
    <scope>NUCLEOTIDE SEQUENCE [LARGE SCALE GENOMIC DNA]</scope>
    <source>
        <strain>PittGG</strain>
    </source>
</reference>
<accession>A5UFX6</accession>
<sequence length="385" mass="43073">MLISNTYNQHFPQLTQEQIASNATKKVICGMSGGVDSSVSAFILQQQGYQVEGLFMKNWEEDDDDDTDYCTAAADLADAQAVCDKLGIKLHKINFAAEYWDNVFEHFLTEYKAGRTPNPDILCNKEIKFKAFLEYAAEDLGADYIATGHYVRRAGDNENAKLLRGLDANKDQSYFLYTLSHKQVGQSLFPVGEIEKPIVRAIAEDLGLITAKKKDSTGICFIGERKFKDFLARYLPAQPGNIRTVDDEIIGRHDGLMYHTLGQRKGLGIGGLKNAGDEAWYVVDKDVENNELIVAQGHDHPRLFSKGLIASQLHWVDREPIRESLRCTVKTRYRQQDIPCVIEPIDDETIRVIFDEPQSAVTPGQSAVFYLGEVCLGGGIIAERI</sequence>
<proteinExistence type="inferred from homology"/>
<protein>
    <recommendedName>
        <fullName evidence="1">tRNA-specific 2-thiouridylase MnmA</fullName>
        <ecNumber evidence="1">2.8.1.13</ecNumber>
    </recommendedName>
</protein>
<name>MNMA_HAEIG</name>
<dbReference type="EC" id="2.8.1.13" evidence="1"/>
<dbReference type="EMBL" id="CP000672">
    <property type="protein sequence ID" value="ABQ99681.1"/>
    <property type="molecule type" value="Genomic_DNA"/>
</dbReference>
<dbReference type="SMR" id="A5UFX6"/>
<dbReference type="KEGG" id="hiq:CGSHiGG_03465"/>
<dbReference type="HOGENOM" id="CLU_035188_1_0_6"/>
<dbReference type="Proteomes" id="UP000001990">
    <property type="component" value="Chromosome"/>
</dbReference>
<dbReference type="GO" id="GO:0005737">
    <property type="term" value="C:cytoplasm"/>
    <property type="evidence" value="ECO:0007669"/>
    <property type="project" value="UniProtKB-SubCell"/>
</dbReference>
<dbReference type="GO" id="GO:0005524">
    <property type="term" value="F:ATP binding"/>
    <property type="evidence" value="ECO:0007669"/>
    <property type="project" value="UniProtKB-KW"/>
</dbReference>
<dbReference type="GO" id="GO:0000049">
    <property type="term" value="F:tRNA binding"/>
    <property type="evidence" value="ECO:0007669"/>
    <property type="project" value="UniProtKB-KW"/>
</dbReference>
<dbReference type="GO" id="GO:0103016">
    <property type="term" value="F:tRNA-uridine 2-sulfurtransferase activity"/>
    <property type="evidence" value="ECO:0007669"/>
    <property type="project" value="UniProtKB-EC"/>
</dbReference>
<dbReference type="GO" id="GO:0002143">
    <property type="term" value="P:tRNA wobble position uridine thiolation"/>
    <property type="evidence" value="ECO:0007669"/>
    <property type="project" value="TreeGrafter"/>
</dbReference>
<dbReference type="CDD" id="cd01998">
    <property type="entry name" value="MnmA_TRMU-like"/>
    <property type="match status" value="1"/>
</dbReference>
<dbReference type="FunFam" id="2.30.30.280:FF:000001">
    <property type="entry name" value="tRNA-specific 2-thiouridylase MnmA"/>
    <property type="match status" value="1"/>
</dbReference>
<dbReference type="FunFam" id="2.40.30.10:FF:000023">
    <property type="entry name" value="tRNA-specific 2-thiouridylase MnmA"/>
    <property type="match status" value="1"/>
</dbReference>
<dbReference type="FunFam" id="3.40.50.620:FF:000004">
    <property type="entry name" value="tRNA-specific 2-thiouridylase MnmA"/>
    <property type="match status" value="1"/>
</dbReference>
<dbReference type="Gene3D" id="2.30.30.280">
    <property type="entry name" value="Adenine nucleotide alpha hydrolases-like domains"/>
    <property type="match status" value="1"/>
</dbReference>
<dbReference type="Gene3D" id="3.40.50.620">
    <property type="entry name" value="HUPs"/>
    <property type="match status" value="1"/>
</dbReference>
<dbReference type="Gene3D" id="2.40.30.10">
    <property type="entry name" value="Translation factors"/>
    <property type="match status" value="1"/>
</dbReference>
<dbReference type="HAMAP" id="MF_00144">
    <property type="entry name" value="tRNA_thiouridyl_MnmA"/>
    <property type="match status" value="1"/>
</dbReference>
<dbReference type="InterPro" id="IPR004506">
    <property type="entry name" value="MnmA-like"/>
</dbReference>
<dbReference type="InterPro" id="IPR046885">
    <property type="entry name" value="MnmA-like_C"/>
</dbReference>
<dbReference type="InterPro" id="IPR046884">
    <property type="entry name" value="MnmA-like_central"/>
</dbReference>
<dbReference type="InterPro" id="IPR023382">
    <property type="entry name" value="MnmA-like_central_sf"/>
</dbReference>
<dbReference type="InterPro" id="IPR014729">
    <property type="entry name" value="Rossmann-like_a/b/a_fold"/>
</dbReference>
<dbReference type="NCBIfam" id="NF001138">
    <property type="entry name" value="PRK00143.1"/>
    <property type="match status" value="1"/>
</dbReference>
<dbReference type="NCBIfam" id="TIGR00420">
    <property type="entry name" value="trmU"/>
    <property type="match status" value="1"/>
</dbReference>
<dbReference type="PANTHER" id="PTHR11933:SF5">
    <property type="entry name" value="MITOCHONDRIAL TRNA-SPECIFIC 2-THIOURIDYLASE 1"/>
    <property type="match status" value="1"/>
</dbReference>
<dbReference type="PANTHER" id="PTHR11933">
    <property type="entry name" value="TRNA 5-METHYLAMINOMETHYL-2-THIOURIDYLATE -METHYLTRANSFERASE"/>
    <property type="match status" value="1"/>
</dbReference>
<dbReference type="Pfam" id="PF03054">
    <property type="entry name" value="tRNA_Me_trans"/>
    <property type="match status" value="1"/>
</dbReference>
<dbReference type="Pfam" id="PF20258">
    <property type="entry name" value="tRNA_Me_trans_C"/>
    <property type="match status" value="1"/>
</dbReference>
<dbReference type="Pfam" id="PF20259">
    <property type="entry name" value="tRNA_Me_trans_M"/>
    <property type="match status" value="1"/>
</dbReference>
<dbReference type="SUPFAM" id="SSF52402">
    <property type="entry name" value="Adenine nucleotide alpha hydrolases-like"/>
    <property type="match status" value="1"/>
</dbReference>
<evidence type="ECO:0000255" key="1">
    <source>
        <dbReference type="HAMAP-Rule" id="MF_00144"/>
    </source>
</evidence>
<gene>
    <name evidence="1" type="primary">mnmA</name>
    <name type="ordered locus">CGSHiGG_03465</name>
</gene>
<comment type="function">
    <text evidence="1">Catalyzes the 2-thiolation of uridine at the wobble position (U34) of tRNA, leading to the formation of s(2)U34.</text>
</comment>
<comment type="catalytic activity">
    <reaction evidence="1">
        <text>S-sulfanyl-L-cysteinyl-[protein] + uridine(34) in tRNA + AH2 + ATP = 2-thiouridine(34) in tRNA + L-cysteinyl-[protein] + A + AMP + diphosphate + H(+)</text>
        <dbReference type="Rhea" id="RHEA:47032"/>
        <dbReference type="Rhea" id="RHEA-COMP:10131"/>
        <dbReference type="Rhea" id="RHEA-COMP:11726"/>
        <dbReference type="Rhea" id="RHEA-COMP:11727"/>
        <dbReference type="Rhea" id="RHEA-COMP:11728"/>
        <dbReference type="ChEBI" id="CHEBI:13193"/>
        <dbReference type="ChEBI" id="CHEBI:15378"/>
        <dbReference type="ChEBI" id="CHEBI:17499"/>
        <dbReference type="ChEBI" id="CHEBI:29950"/>
        <dbReference type="ChEBI" id="CHEBI:30616"/>
        <dbReference type="ChEBI" id="CHEBI:33019"/>
        <dbReference type="ChEBI" id="CHEBI:61963"/>
        <dbReference type="ChEBI" id="CHEBI:65315"/>
        <dbReference type="ChEBI" id="CHEBI:87170"/>
        <dbReference type="ChEBI" id="CHEBI:456215"/>
        <dbReference type="EC" id="2.8.1.13"/>
    </reaction>
</comment>
<comment type="subcellular location">
    <subcellularLocation>
        <location evidence="1">Cytoplasm</location>
    </subcellularLocation>
</comment>
<comment type="similarity">
    <text evidence="1">Belongs to the MnmA/TRMU family.</text>
</comment>
<organism>
    <name type="scientific">Haemophilus influenzae (strain PittGG)</name>
    <dbReference type="NCBI Taxonomy" id="374931"/>
    <lineage>
        <taxon>Bacteria</taxon>
        <taxon>Pseudomonadati</taxon>
        <taxon>Pseudomonadota</taxon>
        <taxon>Gammaproteobacteria</taxon>
        <taxon>Pasteurellales</taxon>
        <taxon>Pasteurellaceae</taxon>
        <taxon>Haemophilus</taxon>
    </lineage>
</organism>
<keyword id="KW-0067">ATP-binding</keyword>
<keyword id="KW-0963">Cytoplasm</keyword>
<keyword id="KW-1015">Disulfide bond</keyword>
<keyword id="KW-0547">Nucleotide-binding</keyword>
<keyword id="KW-0694">RNA-binding</keyword>
<keyword id="KW-0808">Transferase</keyword>
<keyword id="KW-0819">tRNA processing</keyword>
<keyword id="KW-0820">tRNA-binding</keyword>